<comment type="catalytic activity">
    <reaction>
        <text>L-aspartate + L-glutamine + ATP + H2O = L-asparagine + L-glutamate + AMP + diphosphate + H(+)</text>
        <dbReference type="Rhea" id="RHEA:12228"/>
        <dbReference type="ChEBI" id="CHEBI:15377"/>
        <dbReference type="ChEBI" id="CHEBI:15378"/>
        <dbReference type="ChEBI" id="CHEBI:29985"/>
        <dbReference type="ChEBI" id="CHEBI:29991"/>
        <dbReference type="ChEBI" id="CHEBI:30616"/>
        <dbReference type="ChEBI" id="CHEBI:33019"/>
        <dbReference type="ChEBI" id="CHEBI:58048"/>
        <dbReference type="ChEBI" id="CHEBI:58359"/>
        <dbReference type="ChEBI" id="CHEBI:456215"/>
        <dbReference type="EC" id="6.3.5.4"/>
    </reaction>
</comment>
<comment type="pathway">
    <text>Amino-acid biosynthesis; L-asparagine biosynthesis; L-asparagine from L-aspartate (L-Gln route): step 1/1.</text>
</comment>
<feature type="initiator methionine" description="Removed" evidence="1">
    <location>
        <position position="1"/>
    </location>
</feature>
<feature type="chain" id="PRO_0000269563" description="Asparagine synthetase [glutamine-hydrolyzing]">
    <location>
        <begin position="2"/>
        <end position="561"/>
    </location>
</feature>
<feature type="domain" description="Glutamine amidotransferase type-2" evidence="3">
    <location>
        <begin position="2"/>
        <end position="191"/>
    </location>
</feature>
<feature type="domain" description="Asparagine synthetase">
    <location>
        <begin position="213"/>
        <end position="536"/>
    </location>
</feature>
<feature type="active site" description="For GATase activity" evidence="1">
    <location>
        <position position="2"/>
    </location>
</feature>
<feature type="binding site" evidence="1">
    <location>
        <begin position="49"/>
        <end position="53"/>
    </location>
    <ligand>
        <name>L-glutamine</name>
        <dbReference type="ChEBI" id="CHEBI:58359"/>
    </ligand>
</feature>
<feature type="binding site" evidence="1">
    <location>
        <begin position="75"/>
        <end position="77"/>
    </location>
    <ligand>
        <name>L-glutamine</name>
        <dbReference type="ChEBI" id="CHEBI:58359"/>
    </ligand>
</feature>
<feature type="binding site" evidence="1">
    <location>
        <position position="97"/>
    </location>
    <ligand>
        <name>L-glutamine</name>
        <dbReference type="ChEBI" id="CHEBI:58359"/>
    </ligand>
</feature>
<feature type="binding site" evidence="1">
    <location>
        <position position="256"/>
    </location>
    <ligand>
        <name>ATP</name>
        <dbReference type="ChEBI" id="CHEBI:30616"/>
    </ligand>
</feature>
<feature type="binding site" evidence="1">
    <location>
        <position position="288"/>
    </location>
    <ligand>
        <name>ATP</name>
        <dbReference type="ChEBI" id="CHEBI:30616"/>
    </ligand>
</feature>
<feature type="binding site" evidence="1">
    <location>
        <begin position="363"/>
        <end position="364"/>
    </location>
    <ligand>
        <name>ATP</name>
        <dbReference type="ChEBI" id="CHEBI:30616"/>
    </ligand>
</feature>
<feature type="site" description="Important for beta-aspartyl-AMP intermediate formation" evidence="1">
    <location>
        <position position="365"/>
    </location>
</feature>
<feature type="modified residue" description="N6-acetyllysine" evidence="2">
    <location>
        <position position="385"/>
    </location>
</feature>
<feature type="modified residue" description="Phosphothreonine" evidence="2">
    <location>
        <position position="545"/>
    </location>
</feature>
<gene>
    <name type="primary">ASNS</name>
</gene>
<sequence length="561" mass="64220">MCGIWALFGSDDCLSVQCLSAMKIAHRGPDAFRFENVNGYTNCCFGFHRLAVVDQLFGMQPIRVKKYPYLWLCYNGEIYNHKKLQHHFEFEYQTKVDGEIILHLYDKGGIEQTVCMLDGVFAFILLDTANKKVFLGRDTYGVRPLFKAMTEDGFLAVCSEAKGLVNLKHSMTPFLKVEPFLPGHYEVLDLKPNGKVASVEMVKHHHCRDEPLHALYDGVEKLFPGFEIETVKSNLRILFDNAVKKRLMTDRRIGCLLSGGLDSSLVAATLLKQLKEAQVQYPLQTFAIGMEDSPDLLAARKVANHIGSEHHEVLFNSEEGIQVLDEVIFSLETYDITTVRASVGMYLISKYIRKNTDSVVIFSGEGSDELTQGYIYFHKAPSPEKAEEESERLLRELYLFDVLRADRTTAAHGLELRVPFLDHRFSSYYLSLPPDMRVPKNGIEKHLLRETFEDSNLIPKEILWRPKEAFSDGITSVKNSWFRILQDYIEHQVDDAAMASAAQKFPINTPKTKEGYYYRQIFENHYPGRADWLPHYWMPRWTNATDPSARTLTHYKAAAKA</sequence>
<keyword id="KW-0007">Acetylation</keyword>
<keyword id="KW-0028">Amino-acid biosynthesis</keyword>
<keyword id="KW-0061">Asparagine biosynthesis</keyword>
<keyword id="KW-0067">ATP-binding</keyword>
<keyword id="KW-0315">Glutamine amidotransferase</keyword>
<keyword id="KW-0436">Ligase</keyword>
<keyword id="KW-0547">Nucleotide-binding</keyword>
<keyword id="KW-0597">Phosphoprotein</keyword>
<keyword id="KW-1185">Reference proteome</keyword>
<protein>
    <recommendedName>
        <fullName>Asparagine synthetase [glutamine-hydrolyzing]</fullName>
        <ecNumber>6.3.5.4</ecNumber>
    </recommendedName>
    <alternativeName>
        <fullName>Glutamine-dependent asparagine synthetase</fullName>
    </alternativeName>
</protein>
<proteinExistence type="evidence at transcript level"/>
<name>ASNS_BOVIN</name>
<reference key="1">
    <citation type="submission" date="2006-05" db="EMBL/GenBank/DDBJ databases">
        <authorList>
            <consortium name="NIH - Mammalian Gene Collection (MGC) project"/>
        </authorList>
    </citation>
    <scope>NUCLEOTIDE SEQUENCE [LARGE SCALE MRNA]</scope>
    <source>
        <strain>Hereford</strain>
        <tissue>Ascending colon</tissue>
    </source>
</reference>
<organism>
    <name type="scientific">Bos taurus</name>
    <name type="common">Bovine</name>
    <dbReference type="NCBI Taxonomy" id="9913"/>
    <lineage>
        <taxon>Eukaryota</taxon>
        <taxon>Metazoa</taxon>
        <taxon>Chordata</taxon>
        <taxon>Craniata</taxon>
        <taxon>Vertebrata</taxon>
        <taxon>Euteleostomi</taxon>
        <taxon>Mammalia</taxon>
        <taxon>Eutheria</taxon>
        <taxon>Laurasiatheria</taxon>
        <taxon>Artiodactyla</taxon>
        <taxon>Ruminantia</taxon>
        <taxon>Pecora</taxon>
        <taxon>Bovidae</taxon>
        <taxon>Bovinae</taxon>
        <taxon>Bos</taxon>
    </lineage>
</organism>
<evidence type="ECO:0000250" key="1"/>
<evidence type="ECO:0000250" key="2">
    <source>
        <dbReference type="UniProtKB" id="P08243"/>
    </source>
</evidence>
<evidence type="ECO:0000255" key="3">
    <source>
        <dbReference type="PROSITE-ProRule" id="PRU00609"/>
    </source>
</evidence>
<accession>Q1LZA3</accession>
<dbReference type="EC" id="6.3.5.4"/>
<dbReference type="EMBL" id="BC116123">
    <property type="protein sequence ID" value="AAI16124.1"/>
    <property type="molecule type" value="mRNA"/>
</dbReference>
<dbReference type="RefSeq" id="NP_001069121.1">
    <property type="nucleotide sequence ID" value="NM_001075653.1"/>
</dbReference>
<dbReference type="RefSeq" id="XP_015323612.1">
    <property type="nucleotide sequence ID" value="XM_015468126.1"/>
</dbReference>
<dbReference type="RefSeq" id="XP_059741531.1">
    <property type="nucleotide sequence ID" value="XM_059885548.1"/>
</dbReference>
<dbReference type="RefSeq" id="XP_059741532.1">
    <property type="nucleotide sequence ID" value="XM_059885549.1"/>
</dbReference>
<dbReference type="RefSeq" id="XP_059741533.1">
    <property type="nucleotide sequence ID" value="XM_059885550.1"/>
</dbReference>
<dbReference type="SMR" id="Q1LZA3"/>
<dbReference type="FunCoup" id="Q1LZA3">
    <property type="interactions" value="1023"/>
</dbReference>
<dbReference type="STRING" id="9913.ENSBTAP00000068704"/>
<dbReference type="PaxDb" id="9913-ENSBTAP00000004181"/>
<dbReference type="PeptideAtlas" id="Q1LZA3"/>
<dbReference type="Ensembl" id="ENSBTAT00000004181.6">
    <property type="protein sequence ID" value="ENSBTAP00000004181.4"/>
    <property type="gene ID" value="ENSBTAG00000003222.6"/>
</dbReference>
<dbReference type="GeneID" id="514209"/>
<dbReference type="KEGG" id="bta:514209"/>
<dbReference type="CTD" id="440"/>
<dbReference type="VEuPathDB" id="HostDB:ENSBTAG00000003222"/>
<dbReference type="eggNOG" id="KOG0571">
    <property type="taxonomic scope" value="Eukaryota"/>
</dbReference>
<dbReference type="GeneTree" id="ENSGT00390000001994"/>
<dbReference type="HOGENOM" id="CLU_014658_2_1_1"/>
<dbReference type="InParanoid" id="Q1LZA3"/>
<dbReference type="OMA" id="GIVCAFD"/>
<dbReference type="OrthoDB" id="409189at2759"/>
<dbReference type="TreeFam" id="TF300603"/>
<dbReference type="Reactome" id="R-BTA-8963693">
    <property type="pathway name" value="Aspartate and asparagine metabolism"/>
</dbReference>
<dbReference type="UniPathway" id="UPA00134">
    <property type="reaction ID" value="UER00195"/>
</dbReference>
<dbReference type="Proteomes" id="UP000009136">
    <property type="component" value="Chromosome 4"/>
</dbReference>
<dbReference type="Bgee" id="ENSBTAG00000003222">
    <property type="expression patterns" value="Expressed in oocyte and 108 other cell types or tissues"/>
</dbReference>
<dbReference type="GO" id="GO:0005829">
    <property type="term" value="C:cytosol"/>
    <property type="evidence" value="ECO:0000318"/>
    <property type="project" value="GO_Central"/>
</dbReference>
<dbReference type="GO" id="GO:0004066">
    <property type="term" value="F:asparagine synthase (glutamine-hydrolyzing) activity"/>
    <property type="evidence" value="ECO:0000318"/>
    <property type="project" value="GO_Central"/>
</dbReference>
<dbReference type="GO" id="GO:0005524">
    <property type="term" value="F:ATP binding"/>
    <property type="evidence" value="ECO:0007669"/>
    <property type="project" value="UniProtKB-KW"/>
</dbReference>
<dbReference type="GO" id="GO:0006529">
    <property type="term" value="P:asparagine biosynthetic process"/>
    <property type="evidence" value="ECO:0000318"/>
    <property type="project" value="GO_Central"/>
</dbReference>
<dbReference type="GO" id="GO:0070981">
    <property type="term" value="P:L-asparagine biosynthetic process"/>
    <property type="evidence" value="ECO:0007669"/>
    <property type="project" value="UniProtKB-UniPathway"/>
</dbReference>
<dbReference type="CDD" id="cd01991">
    <property type="entry name" value="Asn_synthase_B_C"/>
    <property type="match status" value="1"/>
</dbReference>
<dbReference type="CDD" id="cd00712">
    <property type="entry name" value="AsnB"/>
    <property type="match status" value="1"/>
</dbReference>
<dbReference type="FunFam" id="3.60.20.10:FF:000039">
    <property type="entry name" value="Asparagine synthetase [glutamine-hydrolyzing]"/>
    <property type="match status" value="1"/>
</dbReference>
<dbReference type="FunFam" id="3.40.50.620:FF:000090">
    <property type="entry name" value="asparagine synthetase [glutamine-hydrolyzing]"/>
    <property type="match status" value="1"/>
</dbReference>
<dbReference type="Gene3D" id="3.60.20.10">
    <property type="entry name" value="Glutamine Phosphoribosylpyrophosphate, subunit 1, domain 1"/>
    <property type="match status" value="1"/>
</dbReference>
<dbReference type="Gene3D" id="3.40.50.620">
    <property type="entry name" value="HUPs"/>
    <property type="match status" value="1"/>
</dbReference>
<dbReference type="InterPro" id="IPR006426">
    <property type="entry name" value="Asn_synth_AEB"/>
</dbReference>
<dbReference type="InterPro" id="IPR001962">
    <property type="entry name" value="Asn_synthase"/>
</dbReference>
<dbReference type="InterPro" id="IPR050795">
    <property type="entry name" value="Asn_Synthetase"/>
</dbReference>
<dbReference type="InterPro" id="IPR033738">
    <property type="entry name" value="AsnB_N"/>
</dbReference>
<dbReference type="InterPro" id="IPR017932">
    <property type="entry name" value="GATase_2_dom"/>
</dbReference>
<dbReference type="InterPro" id="IPR029055">
    <property type="entry name" value="Ntn_hydrolases_N"/>
</dbReference>
<dbReference type="InterPro" id="IPR014729">
    <property type="entry name" value="Rossmann-like_a/b/a_fold"/>
</dbReference>
<dbReference type="NCBIfam" id="TIGR01536">
    <property type="entry name" value="asn_synth_AEB"/>
    <property type="match status" value="1"/>
</dbReference>
<dbReference type="PANTHER" id="PTHR11772">
    <property type="entry name" value="ASPARAGINE SYNTHETASE"/>
    <property type="match status" value="1"/>
</dbReference>
<dbReference type="PANTHER" id="PTHR11772:SF23">
    <property type="entry name" value="ASPARAGINE SYNTHETASE [GLUTAMINE-HYDROLYZING]"/>
    <property type="match status" value="1"/>
</dbReference>
<dbReference type="Pfam" id="PF00733">
    <property type="entry name" value="Asn_synthase"/>
    <property type="match status" value="1"/>
</dbReference>
<dbReference type="Pfam" id="PF13537">
    <property type="entry name" value="GATase_7"/>
    <property type="match status" value="1"/>
</dbReference>
<dbReference type="PIRSF" id="PIRSF001589">
    <property type="entry name" value="Asn_synthetase_glu-h"/>
    <property type="match status" value="1"/>
</dbReference>
<dbReference type="SUPFAM" id="SSF52402">
    <property type="entry name" value="Adenine nucleotide alpha hydrolases-like"/>
    <property type="match status" value="1"/>
</dbReference>
<dbReference type="SUPFAM" id="SSF56235">
    <property type="entry name" value="N-terminal nucleophile aminohydrolases (Ntn hydrolases)"/>
    <property type="match status" value="1"/>
</dbReference>
<dbReference type="PROSITE" id="PS51278">
    <property type="entry name" value="GATASE_TYPE_2"/>
    <property type="match status" value="1"/>
</dbReference>